<reference key="1">
    <citation type="journal article" date="2000" name="Nature">
        <title>Sequence and analysis of chromosome 3 of the plant Arabidopsis thaliana.</title>
        <authorList>
            <person name="Salanoubat M."/>
            <person name="Lemcke K."/>
            <person name="Rieger M."/>
            <person name="Ansorge W."/>
            <person name="Unseld M."/>
            <person name="Fartmann B."/>
            <person name="Valle G."/>
            <person name="Bloecker H."/>
            <person name="Perez-Alonso M."/>
            <person name="Obermaier B."/>
            <person name="Delseny M."/>
            <person name="Boutry M."/>
            <person name="Grivell L.A."/>
            <person name="Mache R."/>
            <person name="Puigdomenech P."/>
            <person name="De Simone V."/>
            <person name="Choisne N."/>
            <person name="Artiguenave F."/>
            <person name="Robert C."/>
            <person name="Brottier P."/>
            <person name="Wincker P."/>
            <person name="Cattolico L."/>
            <person name="Weissenbach J."/>
            <person name="Saurin W."/>
            <person name="Quetier F."/>
            <person name="Schaefer M."/>
            <person name="Mueller-Auer S."/>
            <person name="Gabel C."/>
            <person name="Fuchs M."/>
            <person name="Benes V."/>
            <person name="Wurmbach E."/>
            <person name="Drzonek H."/>
            <person name="Erfle H."/>
            <person name="Jordan N."/>
            <person name="Bangert S."/>
            <person name="Wiedelmann R."/>
            <person name="Kranz H."/>
            <person name="Voss H."/>
            <person name="Holland R."/>
            <person name="Brandt P."/>
            <person name="Nyakatura G."/>
            <person name="Vezzi A."/>
            <person name="D'Angelo M."/>
            <person name="Pallavicini A."/>
            <person name="Toppo S."/>
            <person name="Simionati B."/>
            <person name="Conrad A."/>
            <person name="Hornischer K."/>
            <person name="Kauer G."/>
            <person name="Loehnert T.-H."/>
            <person name="Nordsiek G."/>
            <person name="Reichelt J."/>
            <person name="Scharfe M."/>
            <person name="Schoen O."/>
            <person name="Bargues M."/>
            <person name="Terol J."/>
            <person name="Climent J."/>
            <person name="Navarro P."/>
            <person name="Collado C."/>
            <person name="Perez-Perez A."/>
            <person name="Ottenwaelder B."/>
            <person name="Duchemin D."/>
            <person name="Cooke R."/>
            <person name="Laudie M."/>
            <person name="Berger-Llauro C."/>
            <person name="Purnelle B."/>
            <person name="Masuy D."/>
            <person name="de Haan M."/>
            <person name="Maarse A.C."/>
            <person name="Alcaraz J.-P."/>
            <person name="Cottet A."/>
            <person name="Casacuberta E."/>
            <person name="Monfort A."/>
            <person name="Argiriou A."/>
            <person name="Flores M."/>
            <person name="Liguori R."/>
            <person name="Vitale D."/>
            <person name="Mannhaupt G."/>
            <person name="Haase D."/>
            <person name="Schoof H."/>
            <person name="Rudd S."/>
            <person name="Zaccaria P."/>
            <person name="Mewes H.-W."/>
            <person name="Mayer K.F.X."/>
            <person name="Kaul S."/>
            <person name="Town C.D."/>
            <person name="Koo H.L."/>
            <person name="Tallon L.J."/>
            <person name="Jenkins J."/>
            <person name="Rooney T."/>
            <person name="Rizzo M."/>
            <person name="Walts A."/>
            <person name="Utterback T."/>
            <person name="Fujii C.Y."/>
            <person name="Shea T.P."/>
            <person name="Creasy T.H."/>
            <person name="Haas B."/>
            <person name="Maiti R."/>
            <person name="Wu D."/>
            <person name="Peterson J."/>
            <person name="Van Aken S."/>
            <person name="Pai G."/>
            <person name="Militscher J."/>
            <person name="Sellers P."/>
            <person name="Gill J.E."/>
            <person name="Feldblyum T.V."/>
            <person name="Preuss D."/>
            <person name="Lin X."/>
            <person name="Nierman W.C."/>
            <person name="Salzberg S.L."/>
            <person name="White O."/>
            <person name="Venter J.C."/>
            <person name="Fraser C.M."/>
            <person name="Kaneko T."/>
            <person name="Nakamura Y."/>
            <person name="Sato S."/>
            <person name="Kato T."/>
            <person name="Asamizu E."/>
            <person name="Sasamoto S."/>
            <person name="Kimura T."/>
            <person name="Idesawa K."/>
            <person name="Kawashima K."/>
            <person name="Kishida Y."/>
            <person name="Kiyokawa C."/>
            <person name="Kohara M."/>
            <person name="Matsumoto M."/>
            <person name="Matsuno A."/>
            <person name="Muraki A."/>
            <person name="Nakayama S."/>
            <person name="Nakazaki N."/>
            <person name="Shinpo S."/>
            <person name="Takeuchi C."/>
            <person name="Wada T."/>
            <person name="Watanabe A."/>
            <person name="Yamada M."/>
            <person name="Yasuda M."/>
            <person name="Tabata S."/>
        </authorList>
    </citation>
    <scope>NUCLEOTIDE SEQUENCE [LARGE SCALE GENOMIC DNA]</scope>
    <source>
        <strain>cv. Columbia</strain>
    </source>
</reference>
<reference key="2">
    <citation type="journal article" date="2017" name="Plant J.">
        <title>Araport11: a complete reannotation of the Arabidopsis thaliana reference genome.</title>
        <authorList>
            <person name="Cheng C.Y."/>
            <person name="Krishnakumar V."/>
            <person name="Chan A.P."/>
            <person name="Thibaud-Nissen F."/>
            <person name="Schobel S."/>
            <person name="Town C.D."/>
        </authorList>
    </citation>
    <scope>GENOME REANNOTATION</scope>
    <source>
        <strain>cv. Columbia</strain>
    </source>
</reference>
<reference key="3">
    <citation type="submission" date="2004-03" db="EMBL/GenBank/DDBJ databases">
        <title>Arabidopsis ORF clones.</title>
        <authorList>
            <person name="Cheuk R.F."/>
            <person name="Chen H."/>
            <person name="Kim C.J."/>
            <person name="Shinn P."/>
            <person name="Carninci P."/>
            <person name="Hayashizaki Y."/>
            <person name="Ishida J."/>
            <person name="Kamiya A."/>
            <person name="Kawai J."/>
            <person name="Narusaka M."/>
            <person name="Sakurai T."/>
            <person name="Satou M."/>
            <person name="Seki M."/>
            <person name="Shinozaki K."/>
            <person name="Ecker J.R."/>
        </authorList>
    </citation>
    <scope>NUCLEOTIDE SEQUENCE [LARGE SCALE MRNA]</scope>
    <source>
        <strain>cv. Columbia</strain>
    </source>
</reference>
<reference key="4">
    <citation type="submission" date="2005-03" db="EMBL/GenBank/DDBJ databases">
        <title>Large-scale analysis of RIKEN Arabidopsis full-length (RAFL) cDNAs.</title>
        <authorList>
            <person name="Totoki Y."/>
            <person name="Seki M."/>
            <person name="Ishida J."/>
            <person name="Nakajima M."/>
            <person name="Enju A."/>
            <person name="Kamiya A."/>
            <person name="Narusaka M."/>
            <person name="Shin-i T."/>
            <person name="Nakagawa M."/>
            <person name="Sakamoto N."/>
            <person name="Oishi K."/>
            <person name="Kohara Y."/>
            <person name="Kobayashi M."/>
            <person name="Toyoda A."/>
            <person name="Sakaki Y."/>
            <person name="Sakurai T."/>
            <person name="Iida K."/>
            <person name="Akiyama K."/>
            <person name="Satou M."/>
            <person name="Toyoda T."/>
            <person name="Konagaya A."/>
            <person name="Carninci P."/>
            <person name="Kawai J."/>
            <person name="Hayashizaki Y."/>
            <person name="Shinozaki K."/>
        </authorList>
    </citation>
    <scope>NUCLEOTIDE SEQUENCE [LARGE SCALE MRNA]</scope>
    <source>
        <strain>cv. Columbia</strain>
    </source>
</reference>
<proteinExistence type="evidence at transcript level"/>
<name>BIG1C_ARATH</name>
<evidence type="ECO:0000250" key="1">
    <source>
        <dbReference type="UniProtKB" id="Q10R09"/>
    </source>
</evidence>
<evidence type="ECO:0000256" key="2">
    <source>
        <dbReference type="SAM" id="MobiDB-lite"/>
    </source>
</evidence>
<evidence type="ECO:0000305" key="3"/>
<evidence type="ECO:0000312" key="4">
    <source>
        <dbReference type="EMBL" id="AEE77753.1"/>
    </source>
</evidence>
<evidence type="ECO:0000312" key="5">
    <source>
        <dbReference type="EMBL" id="CAB87197.1"/>
    </source>
</evidence>
<evidence type="ECO:0000312" key="6">
    <source>
        <dbReference type="Proteomes" id="UP000006548"/>
    </source>
</evidence>
<sequence>MAFPQRKRTPSFSSSVLDSVYRSIDESDGLQSDLKGSINENVSSSSSSPSPNKKDDKLTTLRRAIMDEEHWLYARSSTTTTNSSDSSSFSSSEAESYRTKRRLRKLAEQGKRSGDERQRTKRTVMDNDSRLFSKSDDDKKPKAVKIIEELKRSKQPVSPGARLTSFLNSIFQSNAKKVKLCSVGKTTDVKSSSSKSCFSRTRNKTDNNNNNCKKLERSIRFYPVRVTIDGDCRDYAQKHITRVRKPIPEFTAKKSVKEEIKTNDHHTEFTCITRNIGLKDFVRSNKYEGKEEEEDAWSHSSSDLFELDSYRIGMGRYLKELPVYETTDFKTNQAIARSLLL</sequence>
<gene>
    <name evidence="4" type="ordered locus">At3g42800</name>
    <name evidence="5" type="ORF">T21C14.20</name>
</gene>
<feature type="chain" id="PRO_0000434446" description="Protein BIG GRAIN 1-like C">
    <location>
        <begin position="1"/>
        <end position="341"/>
    </location>
</feature>
<feature type="region of interest" description="Disordered" evidence="2">
    <location>
        <begin position="28"/>
        <end position="61"/>
    </location>
</feature>
<feature type="region of interest" description="Disordered" evidence="2">
    <location>
        <begin position="76"/>
        <end position="138"/>
    </location>
</feature>
<feature type="compositionally biased region" description="Basic and acidic residues" evidence="2">
    <location>
        <begin position="52"/>
        <end position="61"/>
    </location>
</feature>
<feature type="compositionally biased region" description="Low complexity" evidence="2">
    <location>
        <begin position="76"/>
        <end position="92"/>
    </location>
</feature>
<feature type="compositionally biased region" description="Basic and acidic residues" evidence="2">
    <location>
        <begin position="105"/>
        <end position="138"/>
    </location>
</feature>
<protein>
    <recommendedName>
        <fullName evidence="3">Protein BIG GRAIN 1-like C</fullName>
    </recommendedName>
</protein>
<accession>Q9M2B3</accession>
<comment type="function">
    <text evidence="1">Involved in auxin transport. Regulator of the auxin signaling pathway.</text>
</comment>
<comment type="subcellular location">
    <subcellularLocation>
        <location evidence="1">Cell membrane</location>
    </subcellularLocation>
</comment>
<comment type="similarity">
    <text evidence="3">Belongs to the BIG GRAIN 1 (BG1) plant protein family.</text>
</comment>
<organism evidence="6">
    <name type="scientific">Arabidopsis thaliana</name>
    <name type="common">Mouse-ear cress</name>
    <dbReference type="NCBI Taxonomy" id="3702"/>
    <lineage>
        <taxon>Eukaryota</taxon>
        <taxon>Viridiplantae</taxon>
        <taxon>Streptophyta</taxon>
        <taxon>Embryophyta</taxon>
        <taxon>Tracheophyta</taxon>
        <taxon>Spermatophyta</taxon>
        <taxon>Magnoliopsida</taxon>
        <taxon>eudicotyledons</taxon>
        <taxon>Gunneridae</taxon>
        <taxon>Pentapetalae</taxon>
        <taxon>rosids</taxon>
        <taxon>malvids</taxon>
        <taxon>Brassicales</taxon>
        <taxon>Brassicaceae</taxon>
        <taxon>Camelineae</taxon>
        <taxon>Arabidopsis</taxon>
    </lineage>
</organism>
<keyword id="KW-0927">Auxin signaling pathway</keyword>
<keyword id="KW-1003">Cell membrane</keyword>
<keyword id="KW-0472">Membrane</keyword>
<keyword id="KW-1185">Reference proteome</keyword>
<keyword id="KW-0813">Transport</keyword>
<dbReference type="EMBL" id="AL138639">
    <property type="protein sequence ID" value="CAB87197.1"/>
    <property type="molecule type" value="Genomic_DNA"/>
</dbReference>
<dbReference type="EMBL" id="CP002686">
    <property type="protein sequence ID" value="AEE77753.1"/>
    <property type="molecule type" value="Genomic_DNA"/>
</dbReference>
<dbReference type="EMBL" id="BT011741">
    <property type="protein sequence ID" value="AAS49104.1"/>
    <property type="molecule type" value="mRNA"/>
</dbReference>
<dbReference type="EMBL" id="AK175521">
    <property type="protein sequence ID" value="BAD43284.1"/>
    <property type="molecule type" value="mRNA"/>
</dbReference>
<dbReference type="EMBL" id="AK222200">
    <property type="protein sequence ID" value="BAD95349.1"/>
    <property type="molecule type" value="mRNA"/>
</dbReference>
<dbReference type="PIR" id="T47338">
    <property type="entry name" value="T47338"/>
</dbReference>
<dbReference type="RefSeq" id="NP_189866.1">
    <property type="nucleotide sequence ID" value="NM_114148.3"/>
</dbReference>
<dbReference type="IntAct" id="Q9M2B3">
    <property type="interactions" value="1"/>
</dbReference>
<dbReference type="iPTMnet" id="Q9M2B3"/>
<dbReference type="PaxDb" id="3702-AT3G42800.1"/>
<dbReference type="EnsemblPlants" id="AT3G42800.1">
    <property type="protein sequence ID" value="AT3G42800.1"/>
    <property type="gene ID" value="AT3G42800"/>
</dbReference>
<dbReference type="GeneID" id="823322"/>
<dbReference type="Gramene" id="AT3G42800.1">
    <property type="protein sequence ID" value="AT3G42800.1"/>
    <property type="gene ID" value="AT3G42800"/>
</dbReference>
<dbReference type="KEGG" id="ath:AT3G42800"/>
<dbReference type="Araport" id="AT3G42800"/>
<dbReference type="TAIR" id="AT3G42800"/>
<dbReference type="eggNOG" id="ENOG502RX8F">
    <property type="taxonomic scope" value="Eukaryota"/>
</dbReference>
<dbReference type="HOGENOM" id="CLU_048356_1_0_1"/>
<dbReference type="InParanoid" id="Q9M2B3"/>
<dbReference type="OMA" id="HWLYARS"/>
<dbReference type="PhylomeDB" id="Q9M2B3"/>
<dbReference type="PRO" id="PR:Q9M2B3"/>
<dbReference type="Proteomes" id="UP000006548">
    <property type="component" value="Chromosome 3"/>
</dbReference>
<dbReference type="ExpressionAtlas" id="Q9M2B3">
    <property type="expression patterns" value="baseline and differential"/>
</dbReference>
<dbReference type="GO" id="GO:0005886">
    <property type="term" value="C:plasma membrane"/>
    <property type="evidence" value="ECO:0000250"/>
    <property type="project" value="UniProtKB"/>
</dbReference>
<dbReference type="GO" id="GO:0060918">
    <property type="term" value="P:auxin transport"/>
    <property type="evidence" value="ECO:0000250"/>
    <property type="project" value="UniProtKB"/>
</dbReference>
<dbReference type="GO" id="GO:0009734">
    <property type="term" value="P:auxin-activated signaling pathway"/>
    <property type="evidence" value="ECO:0007669"/>
    <property type="project" value="UniProtKB-KW"/>
</dbReference>
<dbReference type="GO" id="GO:0010929">
    <property type="term" value="P:positive regulation of auxin mediated signaling pathway"/>
    <property type="evidence" value="ECO:0000250"/>
    <property type="project" value="UniProtKB"/>
</dbReference>
<dbReference type="InterPro" id="IPR039621">
    <property type="entry name" value="BG1-like"/>
</dbReference>
<dbReference type="PANTHER" id="PTHR33541">
    <property type="entry name" value="PROTEIN BIG GRAIN 1-LIKE A-RELATED"/>
    <property type="match status" value="1"/>
</dbReference>
<dbReference type="PANTHER" id="PTHR33541:SF13">
    <property type="entry name" value="PROTEIN BIG GRAIN 1-LIKE B-RELATED"/>
    <property type="match status" value="1"/>
</dbReference>